<protein>
    <recommendedName>
        <fullName evidence="1">Aspartate--tRNA(Asp/Asn) ligase</fullName>
        <ecNumber evidence="1">6.1.1.23</ecNumber>
    </recommendedName>
    <alternativeName>
        <fullName evidence="1">Aspartyl-tRNA synthetase</fullName>
        <shortName evidence="1">AspRS</shortName>
    </alternativeName>
    <alternativeName>
        <fullName evidence="1">Non-discriminating aspartyl-tRNA synthetase</fullName>
        <shortName evidence="1">ND-AspRS</shortName>
    </alternativeName>
</protein>
<feature type="chain" id="PRO_0000235525" description="Aspartate--tRNA(Asp/Asn) ligase">
    <location>
        <begin position="1"/>
        <end position="606"/>
    </location>
</feature>
<feature type="region of interest" description="Aspartate" evidence="1">
    <location>
        <begin position="220"/>
        <end position="223"/>
    </location>
</feature>
<feature type="binding site" evidence="1">
    <location>
        <position position="196"/>
    </location>
    <ligand>
        <name>L-aspartate</name>
        <dbReference type="ChEBI" id="CHEBI:29991"/>
    </ligand>
</feature>
<feature type="binding site" evidence="1">
    <location>
        <begin position="242"/>
        <end position="244"/>
    </location>
    <ligand>
        <name>ATP</name>
        <dbReference type="ChEBI" id="CHEBI:30616"/>
    </ligand>
</feature>
<feature type="binding site" evidence="1">
    <location>
        <position position="242"/>
    </location>
    <ligand>
        <name>L-aspartate</name>
        <dbReference type="ChEBI" id="CHEBI:29991"/>
    </ligand>
</feature>
<feature type="binding site" evidence="1">
    <location>
        <position position="251"/>
    </location>
    <ligand>
        <name>ATP</name>
        <dbReference type="ChEBI" id="CHEBI:30616"/>
    </ligand>
</feature>
<feature type="binding site" evidence="1">
    <location>
        <position position="465"/>
    </location>
    <ligand>
        <name>L-aspartate</name>
        <dbReference type="ChEBI" id="CHEBI:29991"/>
    </ligand>
</feature>
<feature type="binding site" evidence="1">
    <location>
        <position position="499"/>
    </location>
    <ligand>
        <name>ATP</name>
        <dbReference type="ChEBI" id="CHEBI:30616"/>
    </ligand>
</feature>
<feature type="binding site" evidence="1">
    <location>
        <position position="506"/>
    </location>
    <ligand>
        <name>L-aspartate</name>
        <dbReference type="ChEBI" id="CHEBI:29991"/>
    </ligand>
</feature>
<feature type="binding site" evidence="1">
    <location>
        <begin position="551"/>
        <end position="554"/>
    </location>
    <ligand>
        <name>ATP</name>
        <dbReference type="ChEBI" id="CHEBI:30616"/>
    </ligand>
</feature>
<feature type="site" description="Important for tRNA non-discrimination" evidence="1">
    <location>
        <position position="52"/>
    </location>
</feature>
<feature type="site" description="Important for tRNA non-discrimination" evidence="1">
    <location>
        <position position="104"/>
    </location>
</feature>
<accession>Q317R3</accession>
<keyword id="KW-0030">Aminoacyl-tRNA synthetase</keyword>
<keyword id="KW-0067">ATP-binding</keyword>
<keyword id="KW-0963">Cytoplasm</keyword>
<keyword id="KW-0436">Ligase</keyword>
<keyword id="KW-0547">Nucleotide-binding</keyword>
<keyword id="KW-0648">Protein biosynthesis</keyword>
<keyword id="KW-1185">Reference proteome</keyword>
<comment type="function">
    <text evidence="1">Aspartyl-tRNA synthetase with relaxed tRNA specificity since it is able to aspartylate not only its cognate tRNA(Asp) but also tRNA(Asn). Reaction proceeds in two steps: L-aspartate is first activated by ATP to form Asp-AMP and then transferred to the acceptor end of tRNA(Asp/Asn).</text>
</comment>
<comment type="catalytic activity">
    <reaction evidence="1">
        <text>tRNA(Asx) + L-aspartate + ATP = L-aspartyl-tRNA(Asx) + AMP + diphosphate</text>
        <dbReference type="Rhea" id="RHEA:18349"/>
        <dbReference type="Rhea" id="RHEA-COMP:9710"/>
        <dbReference type="Rhea" id="RHEA-COMP:9711"/>
        <dbReference type="ChEBI" id="CHEBI:29991"/>
        <dbReference type="ChEBI" id="CHEBI:30616"/>
        <dbReference type="ChEBI" id="CHEBI:33019"/>
        <dbReference type="ChEBI" id="CHEBI:78442"/>
        <dbReference type="ChEBI" id="CHEBI:78516"/>
        <dbReference type="ChEBI" id="CHEBI:456215"/>
        <dbReference type="EC" id="6.1.1.23"/>
    </reaction>
</comment>
<comment type="subunit">
    <text evidence="1">Homodimer.</text>
</comment>
<comment type="subcellular location">
    <subcellularLocation>
        <location evidence="1">Cytoplasm</location>
    </subcellularLocation>
</comment>
<comment type="similarity">
    <text evidence="1">Belongs to the class-II aminoacyl-tRNA synthetase family. Type 1 subfamily.</text>
</comment>
<dbReference type="EC" id="6.1.1.23" evidence="1"/>
<dbReference type="EMBL" id="CP000112">
    <property type="protein sequence ID" value="ABB36813.1"/>
    <property type="molecule type" value="Genomic_DNA"/>
</dbReference>
<dbReference type="RefSeq" id="WP_011366212.1">
    <property type="nucleotide sequence ID" value="NC_007519.1"/>
</dbReference>
<dbReference type="SMR" id="Q317R3"/>
<dbReference type="STRING" id="207559.Dde_0012"/>
<dbReference type="KEGG" id="dde:Dde_0012"/>
<dbReference type="eggNOG" id="COG0173">
    <property type="taxonomic scope" value="Bacteria"/>
</dbReference>
<dbReference type="HOGENOM" id="CLU_014330_3_2_7"/>
<dbReference type="Proteomes" id="UP000002710">
    <property type="component" value="Chromosome"/>
</dbReference>
<dbReference type="GO" id="GO:0005737">
    <property type="term" value="C:cytoplasm"/>
    <property type="evidence" value="ECO:0007669"/>
    <property type="project" value="UniProtKB-SubCell"/>
</dbReference>
<dbReference type="GO" id="GO:0004815">
    <property type="term" value="F:aspartate-tRNA ligase activity"/>
    <property type="evidence" value="ECO:0007669"/>
    <property type="project" value="UniProtKB-UniRule"/>
</dbReference>
<dbReference type="GO" id="GO:0050560">
    <property type="term" value="F:aspartate-tRNA(Asn) ligase activity"/>
    <property type="evidence" value="ECO:0007669"/>
    <property type="project" value="UniProtKB-EC"/>
</dbReference>
<dbReference type="GO" id="GO:0005524">
    <property type="term" value="F:ATP binding"/>
    <property type="evidence" value="ECO:0007669"/>
    <property type="project" value="UniProtKB-UniRule"/>
</dbReference>
<dbReference type="GO" id="GO:0003676">
    <property type="term" value="F:nucleic acid binding"/>
    <property type="evidence" value="ECO:0007669"/>
    <property type="project" value="InterPro"/>
</dbReference>
<dbReference type="GO" id="GO:0006422">
    <property type="term" value="P:aspartyl-tRNA aminoacylation"/>
    <property type="evidence" value="ECO:0007669"/>
    <property type="project" value="UniProtKB-UniRule"/>
</dbReference>
<dbReference type="CDD" id="cd00777">
    <property type="entry name" value="AspRS_core"/>
    <property type="match status" value="1"/>
</dbReference>
<dbReference type="CDD" id="cd04317">
    <property type="entry name" value="EcAspRS_like_N"/>
    <property type="match status" value="1"/>
</dbReference>
<dbReference type="Gene3D" id="3.30.930.10">
    <property type="entry name" value="Bira Bifunctional Protein, Domain 2"/>
    <property type="match status" value="1"/>
</dbReference>
<dbReference type="Gene3D" id="3.30.1360.30">
    <property type="entry name" value="GAD-like domain"/>
    <property type="match status" value="1"/>
</dbReference>
<dbReference type="Gene3D" id="2.40.50.140">
    <property type="entry name" value="Nucleic acid-binding proteins"/>
    <property type="match status" value="1"/>
</dbReference>
<dbReference type="HAMAP" id="MF_00044">
    <property type="entry name" value="Asp_tRNA_synth_type1"/>
    <property type="match status" value="1"/>
</dbReference>
<dbReference type="InterPro" id="IPR004364">
    <property type="entry name" value="Aa-tRNA-synt_II"/>
</dbReference>
<dbReference type="InterPro" id="IPR006195">
    <property type="entry name" value="aa-tRNA-synth_II"/>
</dbReference>
<dbReference type="InterPro" id="IPR045864">
    <property type="entry name" value="aa-tRNA-synth_II/BPL/LPL"/>
</dbReference>
<dbReference type="InterPro" id="IPR004524">
    <property type="entry name" value="Asp-tRNA-ligase_1"/>
</dbReference>
<dbReference type="InterPro" id="IPR047089">
    <property type="entry name" value="Asp-tRNA-ligase_1_N"/>
</dbReference>
<dbReference type="InterPro" id="IPR002312">
    <property type="entry name" value="Asp/Asn-tRNA-synth_IIb"/>
</dbReference>
<dbReference type="InterPro" id="IPR047090">
    <property type="entry name" value="AspRS_core"/>
</dbReference>
<dbReference type="InterPro" id="IPR004115">
    <property type="entry name" value="GAD-like_sf"/>
</dbReference>
<dbReference type="InterPro" id="IPR029351">
    <property type="entry name" value="GAD_dom"/>
</dbReference>
<dbReference type="InterPro" id="IPR012340">
    <property type="entry name" value="NA-bd_OB-fold"/>
</dbReference>
<dbReference type="InterPro" id="IPR004365">
    <property type="entry name" value="NA-bd_OB_tRNA"/>
</dbReference>
<dbReference type="NCBIfam" id="TIGR00459">
    <property type="entry name" value="aspS_bact"/>
    <property type="match status" value="1"/>
</dbReference>
<dbReference type="NCBIfam" id="NF001750">
    <property type="entry name" value="PRK00476.1"/>
    <property type="match status" value="1"/>
</dbReference>
<dbReference type="PANTHER" id="PTHR22594:SF5">
    <property type="entry name" value="ASPARTATE--TRNA LIGASE, MITOCHONDRIAL"/>
    <property type="match status" value="1"/>
</dbReference>
<dbReference type="PANTHER" id="PTHR22594">
    <property type="entry name" value="ASPARTYL/LYSYL-TRNA SYNTHETASE"/>
    <property type="match status" value="1"/>
</dbReference>
<dbReference type="Pfam" id="PF02938">
    <property type="entry name" value="GAD"/>
    <property type="match status" value="1"/>
</dbReference>
<dbReference type="Pfam" id="PF00152">
    <property type="entry name" value="tRNA-synt_2"/>
    <property type="match status" value="1"/>
</dbReference>
<dbReference type="Pfam" id="PF01336">
    <property type="entry name" value="tRNA_anti-codon"/>
    <property type="match status" value="1"/>
</dbReference>
<dbReference type="PRINTS" id="PR01042">
    <property type="entry name" value="TRNASYNTHASP"/>
</dbReference>
<dbReference type="SUPFAM" id="SSF55681">
    <property type="entry name" value="Class II aaRS and biotin synthetases"/>
    <property type="match status" value="1"/>
</dbReference>
<dbReference type="SUPFAM" id="SSF55261">
    <property type="entry name" value="GAD domain-like"/>
    <property type="match status" value="1"/>
</dbReference>
<dbReference type="SUPFAM" id="SSF50249">
    <property type="entry name" value="Nucleic acid-binding proteins"/>
    <property type="match status" value="1"/>
</dbReference>
<dbReference type="PROSITE" id="PS50862">
    <property type="entry name" value="AA_TRNA_LIGASE_II"/>
    <property type="match status" value="1"/>
</dbReference>
<sequence>MSDQNLDIQQDHQKYVESLGDWARTNTCGELNANAIGSEVCLMGWVQFRRDHGGLIFIDLRDRSGLTQVVFSPDVSVDAHERAHVLRSEYVLAVRGTVRPRPEGMVNPNMKTGEVEVYVSEWKLLNTSKTPPFQVEDRVEASENLRLEYRYLDLRRPRLARNFQLRHRATQAIRNYLDQLNFLEVETPYLTKSTPEGARDFLVPSRMNQGEFYALPQSPQIFKQLLMVAGMDRYYQIVRCFRDEDLRADRQPEFTQVDIEMSFVDEERVQSMAEGLMARVFKETLGIDVALPFPRMPYDQAIAEYGLDKPDTRFDLRLKDVTDILRGSGFRLFAKAELVKAMRVPGGAVLSRKEIDDFTEFVKVYGAQGLAWIKIKEDEWQSPIAKFLSDDERAALTTELGLETGDIVFFQAASPDVVNNSLGYLRLKVADRFGLIPENSYNFLWVTDFPLFEYSPEDKRYVACHHPFTAPQVGHEELMVSDPAKARARAYDLVLNGNEVGGGSIRIHSREAQEHMFRALGFDPQEAEEQFGFLMQALELGAPPHGGIAFGMDRLVMLLAGSASIRDVIAFPKTQKATCLMTHAPDQVAAKQLRELGIRLREKQEA</sequence>
<reference key="1">
    <citation type="journal article" date="2011" name="J. Bacteriol.">
        <title>Complete genome sequence and updated annotation of Desulfovibrio alaskensis G20.</title>
        <authorList>
            <person name="Hauser L.J."/>
            <person name="Land M.L."/>
            <person name="Brown S.D."/>
            <person name="Larimer F."/>
            <person name="Keller K.L."/>
            <person name="Rapp-Giles B.J."/>
            <person name="Price M.N."/>
            <person name="Lin M."/>
            <person name="Bruce D.C."/>
            <person name="Detter J.C."/>
            <person name="Tapia R."/>
            <person name="Han C.S."/>
            <person name="Goodwin L.A."/>
            <person name="Cheng J.F."/>
            <person name="Pitluck S."/>
            <person name="Copeland A."/>
            <person name="Lucas S."/>
            <person name="Nolan M."/>
            <person name="Lapidus A.L."/>
            <person name="Palumbo A.V."/>
            <person name="Wall J.D."/>
        </authorList>
    </citation>
    <scope>NUCLEOTIDE SEQUENCE [LARGE SCALE GENOMIC DNA]</scope>
    <source>
        <strain>ATCC BAA-1058 / DSM 17464 / G20</strain>
    </source>
</reference>
<organism>
    <name type="scientific">Oleidesulfovibrio alaskensis (strain ATCC BAA-1058 / DSM 17464 / G20)</name>
    <name type="common">Desulfovibrio alaskensis</name>
    <dbReference type="NCBI Taxonomy" id="207559"/>
    <lineage>
        <taxon>Bacteria</taxon>
        <taxon>Pseudomonadati</taxon>
        <taxon>Thermodesulfobacteriota</taxon>
        <taxon>Desulfovibrionia</taxon>
        <taxon>Desulfovibrionales</taxon>
        <taxon>Desulfovibrionaceae</taxon>
        <taxon>Oleidesulfovibrio</taxon>
    </lineage>
</organism>
<evidence type="ECO:0000255" key="1">
    <source>
        <dbReference type="HAMAP-Rule" id="MF_00044"/>
    </source>
</evidence>
<gene>
    <name evidence="1" type="primary">aspS</name>
    <name type="ordered locus">Dde_0012</name>
</gene>
<name>SYDND_OLEA2</name>
<proteinExistence type="inferred from homology"/>